<proteinExistence type="inferred from homology"/>
<accession>A6L4C4</accession>
<reference key="1">
    <citation type="journal article" date="2007" name="PLoS Biol.">
        <title>Evolution of symbiotic bacteria in the distal human intestine.</title>
        <authorList>
            <person name="Xu J."/>
            <person name="Mahowald M.A."/>
            <person name="Ley R.E."/>
            <person name="Lozupone C.A."/>
            <person name="Hamady M."/>
            <person name="Martens E.C."/>
            <person name="Henrissat B."/>
            <person name="Coutinho P.M."/>
            <person name="Minx P."/>
            <person name="Latreille P."/>
            <person name="Cordum H."/>
            <person name="Van Brunt A."/>
            <person name="Kim K."/>
            <person name="Fulton R.S."/>
            <person name="Fulton L.A."/>
            <person name="Clifton S.W."/>
            <person name="Wilson R.K."/>
            <person name="Knight R.D."/>
            <person name="Gordon J.I."/>
        </authorList>
    </citation>
    <scope>NUCLEOTIDE SEQUENCE [LARGE SCALE GENOMIC DNA]</scope>
    <source>
        <strain>ATCC 8482 / DSM 1447 / JCM 5826 / CCUG 4940 / NBRC 14291 / NCTC 11154</strain>
    </source>
</reference>
<name>PAND_PHOV8</name>
<keyword id="KW-0068">Autocatalytic cleavage</keyword>
<keyword id="KW-0963">Cytoplasm</keyword>
<keyword id="KW-0210">Decarboxylase</keyword>
<keyword id="KW-0456">Lyase</keyword>
<keyword id="KW-0566">Pantothenate biosynthesis</keyword>
<keyword id="KW-0670">Pyruvate</keyword>
<keyword id="KW-0704">Schiff base</keyword>
<keyword id="KW-0865">Zymogen</keyword>
<evidence type="ECO:0000255" key="1">
    <source>
        <dbReference type="HAMAP-Rule" id="MF_00446"/>
    </source>
</evidence>
<sequence>MMIEVLKSKLHCVRVTEANLNYMGSITIDEDLMDAANMIAGEKVHIVDNNNGERFETYIIKGERGSGCICLNGAAARKVQVGDIVIIMSYAMMDFEEAKSFKPTVVFPDSAMNKIV</sequence>
<gene>
    <name evidence="1" type="primary">panD</name>
    <name type="ordered locus">BVU_2899</name>
</gene>
<dbReference type="EC" id="4.1.1.11" evidence="1"/>
<dbReference type="EMBL" id="CP000139">
    <property type="protein sequence ID" value="ABR40538.1"/>
    <property type="molecule type" value="Genomic_DNA"/>
</dbReference>
<dbReference type="RefSeq" id="WP_005843461.1">
    <property type="nucleotide sequence ID" value="NZ_JANSWM010000047.1"/>
</dbReference>
<dbReference type="SMR" id="A6L4C4"/>
<dbReference type="STRING" id="435590.BVU_2899"/>
<dbReference type="PaxDb" id="435590-BVU_2899"/>
<dbReference type="GeneID" id="93446788"/>
<dbReference type="KEGG" id="bvu:BVU_2899"/>
<dbReference type="eggNOG" id="COG0853">
    <property type="taxonomic scope" value="Bacteria"/>
</dbReference>
<dbReference type="HOGENOM" id="CLU_115305_2_0_10"/>
<dbReference type="BioCyc" id="BVUL435590:G1G59-3019-MONOMER"/>
<dbReference type="UniPathway" id="UPA00028">
    <property type="reaction ID" value="UER00002"/>
</dbReference>
<dbReference type="Proteomes" id="UP000002861">
    <property type="component" value="Chromosome"/>
</dbReference>
<dbReference type="GO" id="GO:0005829">
    <property type="term" value="C:cytosol"/>
    <property type="evidence" value="ECO:0007669"/>
    <property type="project" value="TreeGrafter"/>
</dbReference>
<dbReference type="GO" id="GO:0004068">
    <property type="term" value="F:aspartate 1-decarboxylase activity"/>
    <property type="evidence" value="ECO:0007669"/>
    <property type="project" value="UniProtKB-UniRule"/>
</dbReference>
<dbReference type="GO" id="GO:0006523">
    <property type="term" value="P:alanine biosynthetic process"/>
    <property type="evidence" value="ECO:0007669"/>
    <property type="project" value="InterPro"/>
</dbReference>
<dbReference type="GO" id="GO:0015940">
    <property type="term" value="P:pantothenate biosynthetic process"/>
    <property type="evidence" value="ECO:0007669"/>
    <property type="project" value="UniProtKB-UniRule"/>
</dbReference>
<dbReference type="CDD" id="cd06919">
    <property type="entry name" value="Asp_decarbox"/>
    <property type="match status" value="1"/>
</dbReference>
<dbReference type="Gene3D" id="2.40.40.20">
    <property type="match status" value="1"/>
</dbReference>
<dbReference type="HAMAP" id="MF_00446">
    <property type="entry name" value="PanD"/>
    <property type="match status" value="1"/>
</dbReference>
<dbReference type="InterPro" id="IPR009010">
    <property type="entry name" value="Asp_de-COase-like_dom_sf"/>
</dbReference>
<dbReference type="InterPro" id="IPR003190">
    <property type="entry name" value="Asp_decarbox"/>
</dbReference>
<dbReference type="NCBIfam" id="TIGR00223">
    <property type="entry name" value="panD"/>
    <property type="match status" value="1"/>
</dbReference>
<dbReference type="PANTHER" id="PTHR21012">
    <property type="entry name" value="ASPARTATE 1-DECARBOXYLASE"/>
    <property type="match status" value="1"/>
</dbReference>
<dbReference type="PANTHER" id="PTHR21012:SF0">
    <property type="entry name" value="ASPARTATE 1-DECARBOXYLASE"/>
    <property type="match status" value="1"/>
</dbReference>
<dbReference type="Pfam" id="PF02261">
    <property type="entry name" value="Asp_decarbox"/>
    <property type="match status" value="1"/>
</dbReference>
<dbReference type="PIRSF" id="PIRSF006246">
    <property type="entry name" value="Asp_decarbox"/>
    <property type="match status" value="1"/>
</dbReference>
<dbReference type="SUPFAM" id="SSF50692">
    <property type="entry name" value="ADC-like"/>
    <property type="match status" value="1"/>
</dbReference>
<comment type="function">
    <text evidence="1">Catalyzes the pyruvoyl-dependent decarboxylation of aspartate to produce beta-alanine.</text>
</comment>
<comment type="catalytic activity">
    <reaction evidence="1">
        <text>L-aspartate + H(+) = beta-alanine + CO2</text>
        <dbReference type="Rhea" id="RHEA:19497"/>
        <dbReference type="ChEBI" id="CHEBI:15378"/>
        <dbReference type="ChEBI" id="CHEBI:16526"/>
        <dbReference type="ChEBI" id="CHEBI:29991"/>
        <dbReference type="ChEBI" id="CHEBI:57966"/>
        <dbReference type="EC" id="4.1.1.11"/>
    </reaction>
</comment>
<comment type="cofactor">
    <cofactor evidence="1">
        <name>pyruvate</name>
        <dbReference type="ChEBI" id="CHEBI:15361"/>
    </cofactor>
    <text evidence="1">Binds 1 pyruvoyl group covalently per subunit.</text>
</comment>
<comment type="pathway">
    <text evidence="1">Cofactor biosynthesis; (R)-pantothenate biosynthesis; beta-alanine from L-aspartate: step 1/1.</text>
</comment>
<comment type="subunit">
    <text evidence="1">Heterooctamer of four alpha and four beta subunits.</text>
</comment>
<comment type="subcellular location">
    <subcellularLocation>
        <location evidence="1">Cytoplasm</location>
    </subcellularLocation>
</comment>
<comment type="PTM">
    <text evidence="1">Is synthesized initially as an inactive proenzyme, which is activated by self-cleavage at a specific serine bond to produce a beta-subunit with a hydroxyl group at its C-terminus and an alpha-subunit with a pyruvoyl group at its N-terminus.</text>
</comment>
<comment type="similarity">
    <text evidence="1">Belongs to the PanD family.</text>
</comment>
<feature type="chain" id="PRO_0000306933" description="Aspartate 1-decarboxylase beta chain" evidence="1">
    <location>
        <begin position="1"/>
        <end position="24"/>
    </location>
</feature>
<feature type="chain" id="PRO_0000306934" description="Aspartate 1-decarboxylase alpha chain" evidence="1">
    <location>
        <begin position="25"/>
        <end position="116"/>
    </location>
</feature>
<feature type="active site" description="Schiff-base intermediate with substrate; via pyruvic acid" evidence="1">
    <location>
        <position position="25"/>
    </location>
</feature>
<feature type="active site" description="Proton donor" evidence="1">
    <location>
        <position position="58"/>
    </location>
</feature>
<feature type="binding site" evidence="1">
    <location>
        <position position="57"/>
    </location>
    <ligand>
        <name>substrate</name>
    </ligand>
</feature>
<feature type="binding site" evidence="1">
    <location>
        <begin position="73"/>
        <end position="75"/>
    </location>
    <ligand>
        <name>substrate</name>
    </ligand>
</feature>
<feature type="modified residue" description="Pyruvic acid (Ser)" evidence="1">
    <location>
        <position position="25"/>
    </location>
</feature>
<protein>
    <recommendedName>
        <fullName evidence="1">Aspartate 1-decarboxylase</fullName>
        <ecNumber evidence="1">4.1.1.11</ecNumber>
    </recommendedName>
    <alternativeName>
        <fullName evidence="1">Aspartate alpha-decarboxylase</fullName>
    </alternativeName>
    <component>
        <recommendedName>
            <fullName evidence="1">Aspartate 1-decarboxylase beta chain</fullName>
        </recommendedName>
    </component>
    <component>
        <recommendedName>
            <fullName evidence="1">Aspartate 1-decarboxylase alpha chain</fullName>
        </recommendedName>
    </component>
</protein>
<organism>
    <name type="scientific">Phocaeicola vulgatus (strain ATCC 8482 / DSM 1447 / JCM 5826 / CCUG 4940 / NBRC 14291 / NCTC 11154)</name>
    <name type="common">Bacteroides vulgatus</name>
    <dbReference type="NCBI Taxonomy" id="435590"/>
    <lineage>
        <taxon>Bacteria</taxon>
        <taxon>Pseudomonadati</taxon>
        <taxon>Bacteroidota</taxon>
        <taxon>Bacteroidia</taxon>
        <taxon>Bacteroidales</taxon>
        <taxon>Bacteroidaceae</taxon>
        <taxon>Phocaeicola</taxon>
    </lineage>
</organism>